<protein>
    <recommendedName>
        <fullName evidence="1">Fluoride-specific ion channel FluC</fullName>
    </recommendedName>
</protein>
<keyword id="KW-0997">Cell inner membrane</keyword>
<keyword id="KW-1003">Cell membrane</keyword>
<keyword id="KW-0407">Ion channel</keyword>
<keyword id="KW-0406">Ion transport</keyword>
<keyword id="KW-0472">Membrane</keyword>
<keyword id="KW-0479">Metal-binding</keyword>
<keyword id="KW-0915">Sodium</keyword>
<keyword id="KW-0812">Transmembrane</keyword>
<keyword id="KW-1133">Transmembrane helix</keyword>
<keyword id="KW-0813">Transport</keyword>
<comment type="function">
    <text evidence="1">Fluoride-specific ion channel. Important for reducing fluoride concentration in the cell, thus reducing its toxicity.</text>
</comment>
<comment type="catalytic activity">
    <reaction evidence="1">
        <text>fluoride(in) = fluoride(out)</text>
        <dbReference type="Rhea" id="RHEA:76159"/>
        <dbReference type="ChEBI" id="CHEBI:17051"/>
    </reaction>
    <physiologicalReaction direction="left-to-right" evidence="1">
        <dbReference type="Rhea" id="RHEA:76160"/>
    </physiologicalReaction>
</comment>
<comment type="activity regulation">
    <text evidence="1">Na(+) is not transported, but it plays an essential structural role and its presence is essential for fluoride channel function.</text>
</comment>
<comment type="subcellular location">
    <subcellularLocation>
        <location evidence="1">Cell inner membrane</location>
        <topology evidence="1">Multi-pass membrane protein</topology>
    </subcellularLocation>
</comment>
<comment type="similarity">
    <text evidence="1">Belongs to the fluoride channel Fluc/FEX (TC 1.A.43) family.</text>
</comment>
<sequence length="126" mass="13180">MGPLGFVAVGVGAAAGAWLRWGFSVLWNAINPAMPYGTLAANLLGGYLIGLAVGFFDTHAGLPPEWRLLAITGFLGGLTTFSTFSSEVVANLIAGDYGWAAMHLLLHLGGSLLLTALGLWTYRMLA</sequence>
<name>FLUC_CUPTR</name>
<dbReference type="EMBL" id="CU633749">
    <property type="protein sequence ID" value="CAQ69747.1"/>
    <property type="molecule type" value="Genomic_DNA"/>
</dbReference>
<dbReference type="RefSeq" id="WP_012353067.1">
    <property type="nucleotide sequence ID" value="NC_010528.1"/>
</dbReference>
<dbReference type="SMR" id="B3R2M9"/>
<dbReference type="GeneID" id="29763088"/>
<dbReference type="KEGG" id="cti:RALTA_A1805"/>
<dbReference type="eggNOG" id="COG0239">
    <property type="taxonomic scope" value="Bacteria"/>
</dbReference>
<dbReference type="HOGENOM" id="CLU_114342_3_3_4"/>
<dbReference type="BioCyc" id="CTAI977880:RALTA_RS08700-MONOMER"/>
<dbReference type="Proteomes" id="UP000001692">
    <property type="component" value="Chromosome 1"/>
</dbReference>
<dbReference type="GO" id="GO:0005886">
    <property type="term" value="C:plasma membrane"/>
    <property type="evidence" value="ECO:0007669"/>
    <property type="project" value="UniProtKB-SubCell"/>
</dbReference>
<dbReference type="GO" id="GO:0062054">
    <property type="term" value="F:fluoride channel activity"/>
    <property type="evidence" value="ECO:0007669"/>
    <property type="project" value="UniProtKB-UniRule"/>
</dbReference>
<dbReference type="GO" id="GO:0046872">
    <property type="term" value="F:metal ion binding"/>
    <property type="evidence" value="ECO:0007669"/>
    <property type="project" value="UniProtKB-KW"/>
</dbReference>
<dbReference type="GO" id="GO:0140114">
    <property type="term" value="P:cellular detoxification of fluoride"/>
    <property type="evidence" value="ECO:0007669"/>
    <property type="project" value="UniProtKB-UniRule"/>
</dbReference>
<dbReference type="HAMAP" id="MF_00454">
    <property type="entry name" value="FluC"/>
    <property type="match status" value="1"/>
</dbReference>
<dbReference type="InterPro" id="IPR003691">
    <property type="entry name" value="FluC"/>
</dbReference>
<dbReference type="NCBIfam" id="TIGR00494">
    <property type="entry name" value="crcB"/>
    <property type="match status" value="1"/>
</dbReference>
<dbReference type="NCBIfam" id="NF010792">
    <property type="entry name" value="PRK14196.1"/>
    <property type="match status" value="1"/>
</dbReference>
<dbReference type="PANTHER" id="PTHR28259">
    <property type="entry name" value="FLUORIDE EXPORT PROTEIN 1-RELATED"/>
    <property type="match status" value="1"/>
</dbReference>
<dbReference type="PANTHER" id="PTHR28259:SF1">
    <property type="entry name" value="FLUORIDE EXPORT PROTEIN 1-RELATED"/>
    <property type="match status" value="1"/>
</dbReference>
<dbReference type="Pfam" id="PF02537">
    <property type="entry name" value="CRCB"/>
    <property type="match status" value="1"/>
</dbReference>
<organism>
    <name type="scientific">Cupriavidus taiwanensis (strain DSM 17343 / BCRC 17206 / CCUG 44338 / CIP 107171 / LMG 19424 / R1)</name>
    <name type="common">Ralstonia taiwanensis (strain LMG 19424)</name>
    <dbReference type="NCBI Taxonomy" id="977880"/>
    <lineage>
        <taxon>Bacteria</taxon>
        <taxon>Pseudomonadati</taxon>
        <taxon>Pseudomonadota</taxon>
        <taxon>Betaproteobacteria</taxon>
        <taxon>Burkholderiales</taxon>
        <taxon>Burkholderiaceae</taxon>
        <taxon>Cupriavidus</taxon>
    </lineage>
</organism>
<evidence type="ECO:0000255" key="1">
    <source>
        <dbReference type="HAMAP-Rule" id="MF_00454"/>
    </source>
</evidence>
<proteinExistence type="inferred from homology"/>
<accession>B3R2M9</accession>
<feature type="chain" id="PRO_1000125119" description="Fluoride-specific ion channel FluC">
    <location>
        <begin position="1"/>
        <end position="126"/>
    </location>
</feature>
<feature type="transmembrane region" description="Helical" evidence="1">
    <location>
        <begin position="6"/>
        <end position="26"/>
    </location>
</feature>
<feature type="transmembrane region" description="Helical" evidence="1">
    <location>
        <begin position="36"/>
        <end position="56"/>
    </location>
</feature>
<feature type="transmembrane region" description="Helical" evidence="1">
    <location>
        <begin position="69"/>
        <end position="89"/>
    </location>
</feature>
<feature type="transmembrane region" description="Helical" evidence="1">
    <location>
        <begin position="99"/>
        <end position="119"/>
    </location>
</feature>
<feature type="binding site" evidence="1">
    <location>
        <position position="76"/>
    </location>
    <ligand>
        <name>Na(+)</name>
        <dbReference type="ChEBI" id="CHEBI:29101"/>
        <note>structural</note>
    </ligand>
</feature>
<feature type="binding site" evidence="1">
    <location>
        <position position="79"/>
    </location>
    <ligand>
        <name>Na(+)</name>
        <dbReference type="ChEBI" id="CHEBI:29101"/>
        <note>structural</note>
    </ligand>
</feature>
<gene>
    <name evidence="1" type="primary">fluC</name>
    <name evidence="1" type="synonym">crcB</name>
    <name type="ordered locus">RALTA_A1805</name>
</gene>
<reference key="1">
    <citation type="journal article" date="2008" name="Genome Res.">
        <title>Genome sequence of the beta-rhizobium Cupriavidus taiwanensis and comparative genomics of rhizobia.</title>
        <authorList>
            <person name="Amadou C."/>
            <person name="Pascal G."/>
            <person name="Mangenot S."/>
            <person name="Glew M."/>
            <person name="Bontemps C."/>
            <person name="Capela D."/>
            <person name="Carrere S."/>
            <person name="Cruveiller S."/>
            <person name="Dossat C."/>
            <person name="Lajus A."/>
            <person name="Marchetti M."/>
            <person name="Poinsot V."/>
            <person name="Rouy Z."/>
            <person name="Servin B."/>
            <person name="Saad M."/>
            <person name="Schenowitz C."/>
            <person name="Barbe V."/>
            <person name="Batut J."/>
            <person name="Medigue C."/>
            <person name="Masson-Boivin C."/>
        </authorList>
    </citation>
    <scope>NUCLEOTIDE SEQUENCE [LARGE SCALE GENOMIC DNA]</scope>
    <source>
        <strain>DSM 17343 / BCRC 17206 / CCUG 44338 / CIP 107171 / LMG 19424 / R1</strain>
    </source>
</reference>